<accession>A8EY28</accession>
<keyword id="KW-0997">Cell inner membrane</keyword>
<keyword id="KW-1003">Cell membrane</keyword>
<keyword id="KW-0342">GTP-binding</keyword>
<keyword id="KW-0378">Hydrolase</keyword>
<keyword id="KW-0472">Membrane</keyword>
<keyword id="KW-0547">Nucleotide-binding</keyword>
<keyword id="KW-0648">Protein biosynthesis</keyword>
<organism>
    <name type="scientific">Rickettsia canadensis (strain McKiel)</name>
    <dbReference type="NCBI Taxonomy" id="293613"/>
    <lineage>
        <taxon>Bacteria</taxon>
        <taxon>Pseudomonadati</taxon>
        <taxon>Pseudomonadota</taxon>
        <taxon>Alphaproteobacteria</taxon>
        <taxon>Rickettsiales</taxon>
        <taxon>Rickettsiaceae</taxon>
        <taxon>Rickettsieae</taxon>
        <taxon>Rickettsia</taxon>
        <taxon>belli group</taxon>
    </lineage>
</organism>
<name>LEPA_RICCK</name>
<gene>
    <name evidence="1" type="primary">lepA</name>
    <name type="ordered locus">A1E_01580</name>
</gene>
<proteinExistence type="inferred from homology"/>
<feature type="chain" id="PRO_1000032047" description="Elongation factor 4">
    <location>
        <begin position="1"/>
        <end position="600"/>
    </location>
</feature>
<feature type="domain" description="tr-type G">
    <location>
        <begin position="5"/>
        <end position="187"/>
    </location>
</feature>
<feature type="binding site" evidence="1">
    <location>
        <begin position="17"/>
        <end position="22"/>
    </location>
    <ligand>
        <name>GTP</name>
        <dbReference type="ChEBI" id="CHEBI:37565"/>
    </ligand>
</feature>
<feature type="binding site" evidence="1">
    <location>
        <begin position="134"/>
        <end position="137"/>
    </location>
    <ligand>
        <name>GTP</name>
        <dbReference type="ChEBI" id="CHEBI:37565"/>
    </ligand>
</feature>
<evidence type="ECO:0000255" key="1">
    <source>
        <dbReference type="HAMAP-Rule" id="MF_00071"/>
    </source>
</evidence>
<protein>
    <recommendedName>
        <fullName evidence="1">Elongation factor 4</fullName>
        <shortName evidence="1">EF-4</shortName>
        <ecNumber evidence="1">3.6.5.n1</ecNumber>
    </recommendedName>
    <alternativeName>
        <fullName evidence="1">Ribosomal back-translocase LepA</fullName>
    </alternativeName>
</protein>
<sequence length="600" mass="67216">MNNQKYIRNFSIIAHIDHGKSTLADRLIEHCGGFQAREMSKQVLDSMDIEKERGITIKAQTVKLLYKAKDGNTYYLNLMDTPGHVDFAYEVSRSLAACEGSLLVVDSTQGVEAQTLANVYKAIENNHEIVPVLNKIDLPASEPEHVKQQIEDIIGIDASEALLISAKSGIGIDLVLEAIVNKLPPPKESSDDILKALLVDSWYDPYLGVVILVRIIDGALRKNMRIKMMATNSVYKVEHVGYFTPKKHIADVLYAGEIGFFTASIKQVADCKVGDTITDEKKPCEQALPGFKPNLPVVFCGFYPTDSSEFEYLKDSLAKLHLNDSSFEYEMESSSALGVGFRCGFLGLLHLEIIQERLSREFDLDLITTAPSVIYKIYMRDGESLEIYNPADLPNLQKIESIEEPWIKAIIIVPDEFLGAVLSLCTEKRGVQLDHSYIANRARIVYKLPLNEIVYDFYDRLKSCSKGYASFEWQMDVYAPSELVKLGILVNGKAVDALSTIVHRSRAEQTGRALCVRLKDLIPIQQIDIVIQASIGSRIIARETIKALRKDVLSKCYGGDITRKRKLLEKQKIGKKRMRQYGNIEIPQSAFIAALKIGDE</sequence>
<reference key="1">
    <citation type="submission" date="2007-09" db="EMBL/GenBank/DDBJ databases">
        <title>Complete genome sequence of Rickettsia canadensis.</title>
        <authorList>
            <person name="Madan A."/>
            <person name="Fahey J."/>
            <person name="Helton E."/>
            <person name="Ketteman M."/>
            <person name="Madan A."/>
            <person name="Rodrigues S."/>
            <person name="Sanchez A."/>
            <person name="Whiting M."/>
            <person name="Dasch G."/>
            <person name="Eremeeva M."/>
        </authorList>
    </citation>
    <scope>NUCLEOTIDE SEQUENCE [LARGE SCALE GENOMIC DNA]</scope>
    <source>
        <strain>McKiel</strain>
    </source>
</reference>
<dbReference type="EC" id="3.6.5.n1" evidence="1"/>
<dbReference type="EMBL" id="CP000409">
    <property type="protein sequence ID" value="ABV73261.1"/>
    <property type="molecule type" value="Genomic_DNA"/>
</dbReference>
<dbReference type="RefSeq" id="WP_012148460.1">
    <property type="nucleotide sequence ID" value="NC_009879.1"/>
</dbReference>
<dbReference type="SMR" id="A8EY28"/>
<dbReference type="STRING" id="293613.A1E_01580"/>
<dbReference type="KEGG" id="rcm:A1E_01580"/>
<dbReference type="eggNOG" id="COG0481">
    <property type="taxonomic scope" value="Bacteria"/>
</dbReference>
<dbReference type="HOGENOM" id="CLU_009995_3_3_5"/>
<dbReference type="Proteomes" id="UP000007056">
    <property type="component" value="Chromosome"/>
</dbReference>
<dbReference type="GO" id="GO:0005886">
    <property type="term" value="C:plasma membrane"/>
    <property type="evidence" value="ECO:0007669"/>
    <property type="project" value="UniProtKB-SubCell"/>
</dbReference>
<dbReference type="GO" id="GO:0005525">
    <property type="term" value="F:GTP binding"/>
    <property type="evidence" value="ECO:0007669"/>
    <property type="project" value="UniProtKB-UniRule"/>
</dbReference>
<dbReference type="GO" id="GO:0003924">
    <property type="term" value="F:GTPase activity"/>
    <property type="evidence" value="ECO:0007669"/>
    <property type="project" value="UniProtKB-UniRule"/>
</dbReference>
<dbReference type="GO" id="GO:0097216">
    <property type="term" value="F:guanosine tetraphosphate binding"/>
    <property type="evidence" value="ECO:0007669"/>
    <property type="project" value="UniProtKB-ARBA"/>
</dbReference>
<dbReference type="GO" id="GO:0043022">
    <property type="term" value="F:ribosome binding"/>
    <property type="evidence" value="ECO:0007669"/>
    <property type="project" value="UniProtKB-UniRule"/>
</dbReference>
<dbReference type="GO" id="GO:0003746">
    <property type="term" value="F:translation elongation factor activity"/>
    <property type="evidence" value="ECO:0007669"/>
    <property type="project" value="UniProtKB-UniRule"/>
</dbReference>
<dbReference type="GO" id="GO:0045727">
    <property type="term" value="P:positive regulation of translation"/>
    <property type="evidence" value="ECO:0007669"/>
    <property type="project" value="UniProtKB-UniRule"/>
</dbReference>
<dbReference type="CDD" id="cd03699">
    <property type="entry name" value="EF4_II"/>
    <property type="match status" value="1"/>
</dbReference>
<dbReference type="CDD" id="cd16260">
    <property type="entry name" value="EF4_III"/>
    <property type="match status" value="1"/>
</dbReference>
<dbReference type="CDD" id="cd01890">
    <property type="entry name" value="LepA"/>
    <property type="match status" value="1"/>
</dbReference>
<dbReference type="CDD" id="cd03709">
    <property type="entry name" value="lepA_C"/>
    <property type="match status" value="1"/>
</dbReference>
<dbReference type="FunFam" id="3.40.50.300:FF:000078">
    <property type="entry name" value="Elongation factor 4"/>
    <property type="match status" value="1"/>
</dbReference>
<dbReference type="FunFam" id="2.40.30.10:FF:000015">
    <property type="entry name" value="Translation factor GUF1, mitochondrial"/>
    <property type="match status" value="1"/>
</dbReference>
<dbReference type="FunFam" id="3.30.70.240:FF:000007">
    <property type="entry name" value="Translation factor GUF1, mitochondrial"/>
    <property type="match status" value="1"/>
</dbReference>
<dbReference type="FunFam" id="3.30.70.2570:FF:000001">
    <property type="entry name" value="Translation factor GUF1, mitochondrial"/>
    <property type="match status" value="1"/>
</dbReference>
<dbReference type="FunFam" id="3.30.70.870:FF:000004">
    <property type="entry name" value="Translation factor GUF1, mitochondrial"/>
    <property type="match status" value="1"/>
</dbReference>
<dbReference type="Gene3D" id="3.30.70.240">
    <property type="match status" value="1"/>
</dbReference>
<dbReference type="Gene3D" id="3.30.70.2570">
    <property type="entry name" value="Elongation factor 4, C-terminal domain"/>
    <property type="match status" value="1"/>
</dbReference>
<dbReference type="Gene3D" id="3.30.70.870">
    <property type="entry name" value="Elongation Factor G (Translational Gtpase), domain 3"/>
    <property type="match status" value="1"/>
</dbReference>
<dbReference type="Gene3D" id="3.40.50.300">
    <property type="entry name" value="P-loop containing nucleotide triphosphate hydrolases"/>
    <property type="match status" value="1"/>
</dbReference>
<dbReference type="Gene3D" id="2.40.30.10">
    <property type="entry name" value="Translation factors"/>
    <property type="match status" value="1"/>
</dbReference>
<dbReference type="HAMAP" id="MF_00071">
    <property type="entry name" value="LepA"/>
    <property type="match status" value="1"/>
</dbReference>
<dbReference type="InterPro" id="IPR006297">
    <property type="entry name" value="EF-4"/>
</dbReference>
<dbReference type="InterPro" id="IPR035647">
    <property type="entry name" value="EFG_III/V"/>
</dbReference>
<dbReference type="InterPro" id="IPR000640">
    <property type="entry name" value="EFG_V-like"/>
</dbReference>
<dbReference type="InterPro" id="IPR004161">
    <property type="entry name" value="EFTu-like_2"/>
</dbReference>
<dbReference type="InterPro" id="IPR031157">
    <property type="entry name" value="G_TR_CS"/>
</dbReference>
<dbReference type="InterPro" id="IPR038363">
    <property type="entry name" value="LepA_C_sf"/>
</dbReference>
<dbReference type="InterPro" id="IPR013842">
    <property type="entry name" value="LepA_CTD"/>
</dbReference>
<dbReference type="InterPro" id="IPR035654">
    <property type="entry name" value="LepA_IV"/>
</dbReference>
<dbReference type="InterPro" id="IPR027417">
    <property type="entry name" value="P-loop_NTPase"/>
</dbReference>
<dbReference type="InterPro" id="IPR005225">
    <property type="entry name" value="Small_GTP-bd"/>
</dbReference>
<dbReference type="InterPro" id="IPR000795">
    <property type="entry name" value="T_Tr_GTP-bd_dom"/>
</dbReference>
<dbReference type="NCBIfam" id="TIGR01393">
    <property type="entry name" value="lepA"/>
    <property type="match status" value="1"/>
</dbReference>
<dbReference type="NCBIfam" id="TIGR00231">
    <property type="entry name" value="small_GTP"/>
    <property type="match status" value="1"/>
</dbReference>
<dbReference type="PANTHER" id="PTHR43512:SF4">
    <property type="entry name" value="TRANSLATION FACTOR GUF1 HOMOLOG, CHLOROPLASTIC"/>
    <property type="match status" value="1"/>
</dbReference>
<dbReference type="PANTHER" id="PTHR43512">
    <property type="entry name" value="TRANSLATION FACTOR GUF1-RELATED"/>
    <property type="match status" value="1"/>
</dbReference>
<dbReference type="Pfam" id="PF00679">
    <property type="entry name" value="EFG_C"/>
    <property type="match status" value="1"/>
</dbReference>
<dbReference type="Pfam" id="PF00009">
    <property type="entry name" value="GTP_EFTU"/>
    <property type="match status" value="1"/>
</dbReference>
<dbReference type="Pfam" id="PF03144">
    <property type="entry name" value="GTP_EFTU_D2"/>
    <property type="match status" value="1"/>
</dbReference>
<dbReference type="Pfam" id="PF06421">
    <property type="entry name" value="LepA_C"/>
    <property type="match status" value="1"/>
</dbReference>
<dbReference type="PRINTS" id="PR00315">
    <property type="entry name" value="ELONGATNFCT"/>
</dbReference>
<dbReference type="SMART" id="SM00838">
    <property type="entry name" value="EFG_C"/>
    <property type="match status" value="1"/>
</dbReference>
<dbReference type="SUPFAM" id="SSF54980">
    <property type="entry name" value="EF-G C-terminal domain-like"/>
    <property type="match status" value="2"/>
</dbReference>
<dbReference type="SUPFAM" id="SSF52540">
    <property type="entry name" value="P-loop containing nucleoside triphosphate hydrolases"/>
    <property type="match status" value="1"/>
</dbReference>
<dbReference type="PROSITE" id="PS00301">
    <property type="entry name" value="G_TR_1"/>
    <property type="match status" value="1"/>
</dbReference>
<dbReference type="PROSITE" id="PS51722">
    <property type="entry name" value="G_TR_2"/>
    <property type="match status" value="1"/>
</dbReference>
<comment type="function">
    <text evidence="1">Required for accurate and efficient protein synthesis under certain stress conditions. May act as a fidelity factor of the translation reaction, by catalyzing a one-codon backward translocation of tRNAs on improperly translocated ribosomes. Back-translocation proceeds from a post-translocation (POST) complex to a pre-translocation (PRE) complex, thus giving elongation factor G a second chance to translocate the tRNAs correctly. Binds to ribosomes in a GTP-dependent manner.</text>
</comment>
<comment type="catalytic activity">
    <reaction evidence="1">
        <text>GTP + H2O = GDP + phosphate + H(+)</text>
        <dbReference type="Rhea" id="RHEA:19669"/>
        <dbReference type="ChEBI" id="CHEBI:15377"/>
        <dbReference type="ChEBI" id="CHEBI:15378"/>
        <dbReference type="ChEBI" id="CHEBI:37565"/>
        <dbReference type="ChEBI" id="CHEBI:43474"/>
        <dbReference type="ChEBI" id="CHEBI:58189"/>
        <dbReference type="EC" id="3.6.5.n1"/>
    </reaction>
</comment>
<comment type="subcellular location">
    <subcellularLocation>
        <location evidence="1">Cell inner membrane</location>
        <topology evidence="1">Peripheral membrane protein</topology>
        <orientation evidence="1">Cytoplasmic side</orientation>
    </subcellularLocation>
</comment>
<comment type="similarity">
    <text evidence="1">Belongs to the TRAFAC class translation factor GTPase superfamily. Classic translation factor GTPase family. LepA subfamily.</text>
</comment>